<keyword id="KW-0027">Amidation</keyword>
<keyword id="KW-0966">Cell projection</keyword>
<keyword id="KW-0165">Cleavage on pair of basic residues</keyword>
<keyword id="KW-0968">Cytoplasmic vesicle</keyword>
<keyword id="KW-0903">Direct protein sequencing</keyword>
<keyword id="KW-0467">Mast cell degranulation</keyword>
<keyword id="KW-1185">Reference proteome</keyword>
<keyword id="KW-0964">Secreted</keyword>
<keyword id="KW-0732">Signal</keyword>
<name>GRP_CAVPO</name>
<accession>P63152</accession>
<accession>H0W595</accession>
<accession>P01294</accession>
<dbReference type="EMBL" id="AAKN02019873">
    <property type="status" value="NOT_ANNOTATED_CDS"/>
    <property type="molecule type" value="Genomic_DNA"/>
</dbReference>
<dbReference type="PIR" id="A60206">
    <property type="entry name" value="RHGPGA"/>
</dbReference>
<dbReference type="STRING" id="10141.ENSCPOP00000018147"/>
<dbReference type="Ensembl" id="ENSCPOT00000021331.2">
    <property type="protein sequence ID" value="ENSCPOP00000018147.2"/>
    <property type="gene ID" value="ENSCPOG00000027452.2"/>
</dbReference>
<dbReference type="VEuPathDB" id="HostDB:ENSCPOG00000027452"/>
<dbReference type="eggNOG" id="ENOG502S4DG">
    <property type="taxonomic scope" value="Eukaryota"/>
</dbReference>
<dbReference type="GeneTree" id="ENSGT00940000154470"/>
<dbReference type="HOGENOM" id="CLU_144892_0_0_1"/>
<dbReference type="InParanoid" id="P63152"/>
<dbReference type="OMA" id="KDMMDYL"/>
<dbReference type="TreeFam" id="TF336391"/>
<dbReference type="Proteomes" id="UP000005447">
    <property type="component" value="Unassembled WGS sequence"/>
</dbReference>
<dbReference type="Bgee" id="ENSCPOG00000027452">
    <property type="expression patterns" value="Expressed in frontal cortex and 4 other cell types or tissues"/>
</dbReference>
<dbReference type="GO" id="GO:0005615">
    <property type="term" value="C:extracellular space"/>
    <property type="evidence" value="ECO:0000250"/>
    <property type="project" value="UniProtKB"/>
</dbReference>
<dbReference type="GO" id="GO:0043005">
    <property type="term" value="C:neuron projection"/>
    <property type="evidence" value="ECO:0000250"/>
    <property type="project" value="UniProtKB"/>
</dbReference>
<dbReference type="GO" id="GO:0034774">
    <property type="term" value="C:secretory granule lumen"/>
    <property type="evidence" value="ECO:0000250"/>
    <property type="project" value="UniProtKB"/>
</dbReference>
<dbReference type="GO" id="GO:0005184">
    <property type="term" value="F:neuropeptide hormone activity"/>
    <property type="evidence" value="ECO:0007669"/>
    <property type="project" value="Ensembl"/>
</dbReference>
<dbReference type="GO" id="GO:0043303">
    <property type="term" value="P:mast cell degranulation"/>
    <property type="evidence" value="ECO:0000250"/>
    <property type="project" value="UniProtKB"/>
</dbReference>
<dbReference type="GO" id="GO:1903817">
    <property type="term" value="P:negative regulation of voltage-gated potassium channel activity"/>
    <property type="evidence" value="ECO:0000250"/>
    <property type="project" value="UniProtKB"/>
</dbReference>
<dbReference type="GO" id="GO:1905151">
    <property type="term" value="P:negative regulation of voltage-gated sodium channel activity"/>
    <property type="evidence" value="ECO:0000250"/>
    <property type="project" value="UniProtKB"/>
</dbReference>
<dbReference type="GO" id="GO:0007218">
    <property type="term" value="P:neuropeptide signaling pathway"/>
    <property type="evidence" value="ECO:0007669"/>
    <property type="project" value="Ensembl"/>
</dbReference>
<dbReference type="GO" id="GO:2000987">
    <property type="term" value="P:positive regulation of behavioral fear response"/>
    <property type="evidence" value="ECO:0000250"/>
    <property type="project" value="UniProtKB"/>
</dbReference>
<dbReference type="GO" id="GO:0090277">
    <property type="term" value="P:positive regulation of peptide hormone secretion"/>
    <property type="evidence" value="ECO:0000250"/>
    <property type="project" value="UniProtKB"/>
</dbReference>
<dbReference type="GO" id="GO:1900738">
    <property type="term" value="P:positive regulation of phospholipase C-activating G protein-coupled receptor signaling pathway"/>
    <property type="evidence" value="ECO:0000250"/>
    <property type="project" value="UniProtKB"/>
</dbReference>
<dbReference type="GO" id="GO:1903942">
    <property type="term" value="P:positive regulation of respiratory gaseous exchange"/>
    <property type="evidence" value="ECO:0000250"/>
    <property type="project" value="UniProtKB"/>
</dbReference>
<dbReference type="GO" id="GO:0036343">
    <property type="term" value="P:psychomotor behavior"/>
    <property type="evidence" value="ECO:0007669"/>
    <property type="project" value="Ensembl"/>
</dbReference>
<dbReference type="GO" id="GO:0043207">
    <property type="term" value="P:response to external biotic stimulus"/>
    <property type="evidence" value="ECO:0007669"/>
    <property type="project" value="Ensembl"/>
</dbReference>
<dbReference type="GO" id="GO:0035176">
    <property type="term" value="P:social behavior"/>
    <property type="evidence" value="ECO:0007669"/>
    <property type="project" value="Ensembl"/>
</dbReference>
<dbReference type="InterPro" id="IPR000874">
    <property type="entry name" value="Bombesin"/>
</dbReference>
<dbReference type="PANTHER" id="PTHR16866">
    <property type="entry name" value="GASTRIN-RELEASING PEPTIDE"/>
    <property type="match status" value="1"/>
</dbReference>
<dbReference type="PANTHER" id="PTHR16866:SF2">
    <property type="entry name" value="GASTRIN-RELEASING PEPTIDE"/>
    <property type="match status" value="1"/>
</dbReference>
<dbReference type="Pfam" id="PF02044">
    <property type="entry name" value="Bombesin"/>
    <property type="match status" value="1"/>
</dbReference>
<dbReference type="PROSITE" id="PS00257">
    <property type="entry name" value="BOMBESIN"/>
    <property type="match status" value="1"/>
</dbReference>
<evidence type="ECO:0000250" key="1">
    <source>
        <dbReference type="UniProtKB" id="P07492"/>
    </source>
</evidence>
<evidence type="ECO:0000250" key="2">
    <source>
        <dbReference type="UniProtKB" id="P24393"/>
    </source>
</evidence>
<evidence type="ECO:0000250" key="3">
    <source>
        <dbReference type="UniProtKB" id="P63153"/>
    </source>
</evidence>
<evidence type="ECO:0000250" key="4">
    <source>
        <dbReference type="UniProtKB" id="Q863C3"/>
    </source>
</evidence>
<evidence type="ECO:0000250" key="5">
    <source>
        <dbReference type="UniProtKB" id="Q8R1I2"/>
    </source>
</evidence>
<evidence type="ECO:0000256" key="6">
    <source>
        <dbReference type="SAM" id="MobiDB-lite"/>
    </source>
</evidence>
<evidence type="ECO:0000269" key="7">
    <source>
    </source>
</evidence>
<evidence type="ECO:0000305" key="8"/>
<evidence type="ECO:0000312" key="9">
    <source>
        <dbReference type="Proteomes" id="UP000005447"/>
    </source>
</evidence>
<feature type="signal peptide" evidence="7">
    <location>
        <begin position="1"/>
        <end position="23"/>
    </location>
</feature>
<feature type="peptide" id="PRO_0000045914" description="Gastrin-releasing peptide" evidence="7">
    <location>
        <begin position="24"/>
        <end position="50"/>
    </location>
</feature>
<feature type="peptide" id="PRO_0000003034" description="Neuromedin-C" evidence="4">
    <location>
        <begin position="41"/>
        <end position="50"/>
    </location>
</feature>
<feature type="propeptide" id="PRO_0000455539" evidence="7">
    <location>
        <begin position="54"/>
        <end position="143"/>
    </location>
</feature>
<feature type="region of interest" description="Disordered" evidence="6">
    <location>
        <begin position="91"/>
        <end position="115"/>
    </location>
</feature>
<feature type="compositionally biased region" description="Polar residues" evidence="6">
    <location>
        <begin position="92"/>
        <end position="111"/>
    </location>
</feature>
<feature type="modified residue" description="Methionine amide" evidence="1">
    <location>
        <position position="50"/>
    </location>
</feature>
<sequence length="143" mass="15420">MRGPELRLVLLALVLCQAPLGPAAPVSVGGGTVLAKMYPRGNHWAVGHLMGKKSTGESRHVLEGDGLKELLRDDIQWEEATRNLLGLIEAKGNSSHRSPQLKPLSTHQPTLDTEDSSNLKDVQLAKLVDYLLQGLKAKEGALS</sequence>
<reference evidence="9" key="1">
    <citation type="journal article" date="2011" name="Nature">
        <title>A high-resolution map of human evolutionary constraint using 29 mammals.</title>
        <authorList>
            <person name="Lindblad-Toh K."/>
            <person name="Garber M."/>
            <person name="Zuk O."/>
            <person name="Lin M.F."/>
            <person name="Parker B.J."/>
            <person name="Washietl S."/>
            <person name="Kheradpour P."/>
            <person name="Ernst J."/>
            <person name="Jordan G."/>
            <person name="Mauceli E."/>
            <person name="Ward L.D."/>
            <person name="Lowe C.B."/>
            <person name="Holloway A.K."/>
            <person name="Clamp M."/>
            <person name="Gnerre S."/>
            <person name="Alfoldi J."/>
            <person name="Beal K."/>
            <person name="Chang J."/>
            <person name="Clawson H."/>
            <person name="Cuff J."/>
            <person name="Di Palma F."/>
            <person name="Fitzgerald S."/>
            <person name="Flicek P."/>
            <person name="Guttman M."/>
            <person name="Hubisz M.J."/>
            <person name="Jaffe D.B."/>
            <person name="Jungreis I."/>
            <person name="Kent W.J."/>
            <person name="Kostka D."/>
            <person name="Lara M."/>
            <person name="Martins A.L."/>
            <person name="Massingham T."/>
            <person name="Moltke I."/>
            <person name="Raney B.J."/>
            <person name="Rasmussen M.D."/>
            <person name="Robinson J."/>
            <person name="Stark A."/>
            <person name="Vilella A.J."/>
            <person name="Wen J."/>
            <person name="Xie X."/>
            <person name="Zody M.C."/>
            <person name="Baldwin J."/>
            <person name="Bloom T."/>
            <person name="Chin C.W."/>
            <person name="Heiman D."/>
            <person name="Nicol R."/>
            <person name="Nusbaum C."/>
            <person name="Young S."/>
            <person name="Wilkinson J."/>
            <person name="Worley K.C."/>
            <person name="Kovar C.L."/>
            <person name="Muzny D.M."/>
            <person name="Gibbs R.A."/>
            <person name="Cree A."/>
            <person name="Dihn H.H."/>
            <person name="Fowler G."/>
            <person name="Jhangiani S."/>
            <person name="Joshi V."/>
            <person name="Lee S."/>
            <person name="Lewis L.R."/>
            <person name="Nazareth L.V."/>
            <person name="Okwuonu G."/>
            <person name="Santibanez J."/>
            <person name="Warren W.C."/>
            <person name="Mardis E.R."/>
            <person name="Weinstock G.M."/>
            <person name="Wilson R.K."/>
            <person name="Delehaunty K."/>
            <person name="Dooling D."/>
            <person name="Fronik C."/>
            <person name="Fulton L."/>
            <person name="Fulton B."/>
            <person name="Graves T."/>
            <person name="Minx P."/>
            <person name="Sodergren E."/>
            <person name="Birney E."/>
            <person name="Margulies E.H."/>
            <person name="Herrero J."/>
            <person name="Green E.D."/>
            <person name="Haussler D."/>
            <person name="Siepel A."/>
            <person name="Goldman N."/>
            <person name="Pollard K.S."/>
            <person name="Pedersen J.S."/>
            <person name="Lander E.S."/>
            <person name="Kellis M."/>
        </authorList>
    </citation>
    <scope>NUCLEOTIDE SEQUENCE [LARGE SCALE GENOMIC DNA]</scope>
    <source>
        <strain evidence="9">2N</strain>
    </source>
</reference>
<reference key="2">
    <citation type="journal article" date="1987" name="J. Neurochem.">
        <title>Primary structure and tissue distribution of guinea pig gastrin-releasing peptide.</title>
        <authorList>
            <person name="Shaw C."/>
            <person name="Thim L."/>
            <person name="Conlon J.M."/>
        </authorList>
    </citation>
    <scope>PROTEIN SEQUENCE OF 24-50</scope>
</reference>
<gene>
    <name type="primary">GRP</name>
</gene>
<comment type="function">
    <text evidence="2 3 5">Stimulates the release of gastrin and other gastrointestinal hormones (By similarity). Contributes to the perception of prurient stimuli and to the transmission of itch signals in the spinal cord that promote scratching behavior (By similarity). Contributes primarily to nonhistaminergic itch sensation (By similarity). In one study, shown to act in the amygdala as part of an inhibitory network which inhibits memory specifically related to learned fear (By similarity). In another study, shown to act on vasoactive intestinal peptide (VIP)-expressing cells in the auditory cortex, most likely via extrasynaptic diffusion from local and long-range sources, to mediate disinhibition of glutamatergic cells via VIP cell-specific GRPR signaling which leads to enhanced auditory fear memories (By similarity). Contributes to the regulation of food intake (By similarity). Inhibits voltage-gated sodium channels but enhances voltage-gated potassium channels in hippocampal neurons (By similarity). Induces sighing by acting directly on the pre-Botzinger complex, a cluster of several thousand neurons in the ventrolateral medulla responsible for inspiration during respiratory activity (By similarity).</text>
</comment>
<comment type="function">
    <molecule>Neuromedin-C</molecule>
    <text evidence="5">Induces an itch response through activation of receptors present on mast cells, triggering mast cell degranulation.</text>
</comment>
<comment type="subcellular location">
    <subcellularLocation>
        <location evidence="1">Secreted</location>
    </subcellularLocation>
    <subcellularLocation>
        <location evidence="4">Cytoplasmic vesicle</location>
        <location evidence="4">Secretory vesicle lumen</location>
    </subcellularLocation>
    <subcellularLocation>
        <location evidence="5">Cell projection</location>
        <location evidence="5">Neuron projection</location>
    </subcellularLocation>
    <text evidence="5">In neurons of the retrotrapezoid nucleus/parafacial respiratory group, expressed on neuron projections which project into the pre-Botzinger complex.</text>
</comment>
<comment type="similarity">
    <text evidence="8">Belongs to the bombesin/neuromedin-B/ranatensin family.</text>
</comment>
<protein>
    <recommendedName>
        <fullName>Gastrin-releasing peptide</fullName>
        <shortName>GRP</shortName>
    </recommendedName>
    <component>
        <recommendedName>
            <fullName>Neuromedin-C</fullName>
        </recommendedName>
        <alternativeName>
            <fullName>GRP-10</fullName>
        </alternativeName>
        <alternativeName>
            <fullName evidence="5">GRP18-27</fullName>
        </alternativeName>
    </component>
</protein>
<proteinExistence type="evidence at protein level"/>
<organism>
    <name type="scientific">Cavia porcellus</name>
    <name type="common">Guinea pig</name>
    <dbReference type="NCBI Taxonomy" id="10141"/>
    <lineage>
        <taxon>Eukaryota</taxon>
        <taxon>Metazoa</taxon>
        <taxon>Chordata</taxon>
        <taxon>Craniata</taxon>
        <taxon>Vertebrata</taxon>
        <taxon>Euteleostomi</taxon>
        <taxon>Mammalia</taxon>
        <taxon>Eutheria</taxon>
        <taxon>Euarchontoglires</taxon>
        <taxon>Glires</taxon>
        <taxon>Rodentia</taxon>
        <taxon>Hystricomorpha</taxon>
        <taxon>Caviidae</taxon>
        <taxon>Cavia</taxon>
    </lineage>
</organism>